<gene>
    <name evidence="2" type="primary">cfbD</name>
    <name type="ordered locus">MTH_1522</name>
</gene>
<keyword id="KW-0067">ATP-binding</keyword>
<keyword id="KW-0408">Iron</keyword>
<keyword id="KW-0411">Iron-sulfur</keyword>
<keyword id="KW-0436">Ligase</keyword>
<keyword id="KW-0479">Metal-binding</keyword>
<keyword id="KW-0484">Methanogenesis</keyword>
<keyword id="KW-0547">Nucleotide-binding</keyword>
<keyword id="KW-1185">Reference proteome</keyword>
<accession>O27566</accession>
<dbReference type="EC" id="6.3.3.7" evidence="1"/>
<dbReference type="EMBL" id="AE000666">
    <property type="protein sequence ID" value="AAB85997.1"/>
    <property type="molecule type" value="Genomic_DNA"/>
</dbReference>
<dbReference type="PIR" id="B69070">
    <property type="entry name" value="B69070"/>
</dbReference>
<dbReference type="RefSeq" id="WP_010877132.1">
    <property type="nucleotide sequence ID" value="NC_000916.1"/>
</dbReference>
<dbReference type="SMR" id="O27566"/>
<dbReference type="FunCoup" id="O27566">
    <property type="interactions" value="91"/>
</dbReference>
<dbReference type="STRING" id="187420.MTH_1522"/>
<dbReference type="PaxDb" id="187420-MTH_1522"/>
<dbReference type="EnsemblBacteria" id="AAB85997">
    <property type="protein sequence ID" value="AAB85997"/>
    <property type="gene ID" value="MTH_1522"/>
</dbReference>
<dbReference type="GeneID" id="1471791"/>
<dbReference type="GeneID" id="77402041"/>
<dbReference type="KEGG" id="mth:MTH_1522"/>
<dbReference type="PATRIC" id="fig|187420.15.peg.1485"/>
<dbReference type="HOGENOM" id="CLU_782144_0_0_2"/>
<dbReference type="InParanoid" id="O27566"/>
<dbReference type="Proteomes" id="UP000005223">
    <property type="component" value="Chromosome"/>
</dbReference>
<dbReference type="GO" id="GO:0005524">
    <property type="term" value="F:ATP binding"/>
    <property type="evidence" value="ECO:0007669"/>
    <property type="project" value="UniProtKB-KW"/>
</dbReference>
<dbReference type="GO" id="GO:0051536">
    <property type="term" value="F:iron-sulfur cluster binding"/>
    <property type="evidence" value="ECO:0007669"/>
    <property type="project" value="UniProtKB-KW"/>
</dbReference>
<dbReference type="GO" id="GO:0016874">
    <property type="term" value="F:ligase activity"/>
    <property type="evidence" value="ECO:0007669"/>
    <property type="project" value="UniProtKB-KW"/>
</dbReference>
<dbReference type="GO" id="GO:0046872">
    <property type="term" value="F:metal ion binding"/>
    <property type="evidence" value="ECO:0007669"/>
    <property type="project" value="UniProtKB-KW"/>
</dbReference>
<dbReference type="GO" id="GO:0016491">
    <property type="term" value="F:oxidoreductase activity"/>
    <property type="evidence" value="ECO:0007669"/>
    <property type="project" value="InterPro"/>
</dbReference>
<dbReference type="GO" id="GO:0015948">
    <property type="term" value="P:methanogenesis"/>
    <property type="evidence" value="ECO:0007669"/>
    <property type="project" value="UniProtKB-KW"/>
</dbReference>
<dbReference type="Gene3D" id="3.40.50.1980">
    <property type="entry name" value="Nitrogenase molybdenum iron protein domain"/>
    <property type="match status" value="1"/>
</dbReference>
<dbReference type="InterPro" id="IPR017675">
    <property type="entry name" value="CfbD"/>
</dbReference>
<dbReference type="InterPro" id="IPR000510">
    <property type="entry name" value="Nase/OxRdtase_comp1"/>
</dbReference>
<dbReference type="InterPro" id="IPR052673">
    <property type="entry name" value="Ni-siroh_cyclase_CfbD"/>
</dbReference>
<dbReference type="NCBIfam" id="TIGR03282">
    <property type="entry name" value="methan_mark_13"/>
    <property type="match status" value="1"/>
</dbReference>
<dbReference type="PANTHER" id="PTHR42846">
    <property type="entry name" value="NI-SIROHYDROCHLORIN A,C-DIAMIDE REDUCTIVE CYCLASE COMPLEX, COMPONENT CFBD"/>
    <property type="match status" value="1"/>
</dbReference>
<dbReference type="PANTHER" id="PTHR42846:SF1">
    <property type="entry name" value="NI-SIROHYDROCHLORIN A,C-DIAMIDE REDUCTIVE CYCLASE COMPLEX, COMPONENT CFBD"/>
    <property type="match status" value="1"/>
</dbReference>
<dbReference type="Pfam" id="PF00148">
    <property type="entry name" value="Oxidored_nitro"/>
    <property type="match status" value="1"/>
</dbReference>
<dbReference type="SUPFAM" id="SSF53807">
    <property type="entry name" value="Helical backbone' metal receptor"/>
    <property type="match status" value="1"/>
</dbReference>
<proteinExistence type="inferred from homology"/>
<organism>
    <name type="scientific">Methanothermobacter thermautotrophicus (strain ATCC 29096 / DSM 1053 / JCM 10044 / NBRC 100330 / Delta H)</name>
    <name type="common">Methanobacterium thermoautotrophicum</name>
    <dbReference type="NCBI Taxonomy" id="187420"/>
    <lineage>
        <taxon>Archaea</taxon>
        <taxon>Methanobacteriati</taxon>
        <taxon>Methanobacteriota</taxon>
        <taxon>Methanomada group</taxon>
        <taxon>Methanobacteria</taxon>
        <taxon>Methanobacteriales</taxon>
        <taxon>Methanobacteriaceae</taxon>
        <taxon>Methanothermobacter</taxon>
    </lineage>
</organism>
<comment type="function">
    <text evidence="1">Involved in the biosynthesis of the unique nickel-containing tetrapyrrole coenzyme F430, the prosthetic group of methyl-coenzyme M reductase (MCR), which plays a key role in methanogenesis and anaerobic methane oxidation. Catalyzes both the six-electron reduction of the tetrahydroporphyrin ring system and the gamma-lactamization of the c-acetamide side chain of Ni-sirohydrochlorin a,c-diamide to yield 15,17(3)-seco-F430-17(3)-acid (seco-F430), the last intermediate in the biosynthesis of the coenzyme F430.</text>
</comment>
<comment type="catalytic activity">
    <reaction evidence="1">
        <text>Ni-sirohydrochlorin a,c-diamide + 3 AH2 + ATP + H2O = 15,17(3)-seco-F430-17(3)-acid + 3 A + ADP + phosphate</text>
        <dbReference type="Rhea" id="RHEA:52900"/>
        <dbReference type="ChEBI" id="CHEBI:13193"/>
        <dbReference type="ChEBI" id="CHEBI:15377"/>
        <dbReference type="ChEBI" id="CHEBI:17499"/>
        <dbReference type="ChEBI" id="CHEBI:30616"/>
        <dbReference type="ChEBI" id="CHEBI:43474"/>
        <dbReference type="ChEBI" id="CHEBI:136887"/>
        <dbReference type="ChEBI" id="CHEBI:136888"/>
        <dbReference type="ChEBI" id="CHEBI:456216"/>
        <dbReference type="EC" id="6.3.3.7"/>
    </reaction>
</comment>
<comment type="cofactor">
    <cofactor evidence="1">
        <name>[4Fe-4S] cluster</name>
        <dbReference type="ChEBI" id="CHEBI:49883"/>
    </cofactor>
</comment>
<comment type="subunit">
    <text evidence="1">Homodimer or monomer. The Ni-sirohydrochlorin a,c-diamide reductive cyclase complex is composed of a NifH homolog component CfbC and a NifD homolog component CfbD.</text>
</comment>
<comment type="similarity">
    <text evidence="1">Belongs to the NifD/NifK/NifE/NifN family.</text>
</comment>
<sequence>MHPRPSPIAASLYTLRDLDADVIILHGPHGCCFRTGRLLETDGVRVLTTAMSEQDFIFGASDKLTETLRKAYEMFSPKLVGVVGTCASMIIGEDLKEAVQRAGIPARVLAVESHGGFGEGDNTEGAIIVLEAAAEQGIIPEEEAERQIKMLKLATEIEKTRGMAQGKYIRPSYGDDKDEVALRVLEAIMEGRRVAFVLNAKKETSYLFADTLTLPFGSLNPDNPPIIIANLDKGIGLPRIRRHAENILSEIERSGNRVEHITGGLDEYPITGARAAEILRNEEIEFAVVSGVPHALPVEELGLESVAVTDGPRLVEPLRGLGYTHVVAELDAHARTLGQRSIVESDFGDALRRNIKKVI</sequence>
<evidence type="ECO:0000250" key="1">
    <source>
        <dbReference type="UniProtKB" id="Q46FL2"/>
    </source>
</evidence>
<evidence type="ECO:0000250" key="2">
    <source>
        <dbReference type="UniProtKB" id="Q8TJZ8"/>
    </source>
</evidence>
<feature type="chain" id="PRO_0000107318" description="Ni-sirohydrochlorin a,c-diamide reductive cyclase complex, component CfbD">
    <location>
        <begin position="1"/>
        <end position="359"/>
    </location>
</feature>
<protein>
    <recommendedName>
        <fullName evidence="1">Ni-sirohydrochlorin a,c-diamide reductive cyclase complex, component CfbD</fullName>
        <ecNumber evidence="1">6.3.3.7</ecNumber>
    </recommendedName>
    <alternativeName>
        <fullName evidence="1">NifD homolog component CfbD</fullName>
    </alternativeName>
</protein>
<name>CFBD_METTH</name>
<reference key="1">
    <citation type="journal article" date="1997" name="J. Bacteriol.">
        <title>Complete genome sequence of Methanobacterium thermoautotrophicum deltaH: functional analysis and comparative genomics.</title>
        <authorList>
            <person name="Smith D.R."/>
            <person name="Doucette-Stamm L.A."/>
            <person name="Deloughery C."/>
            <person name="Lee H.-M."/>
            <person name="Dubois J."/>
            <person name="Aldredge T."/>
            <person name="Bashirzadeh R."/>
            <person name="Blakely D."/>
            <person name="Cook R."/>
            <person name="Gilbert K."/>
            <person name="Harrison D."/>
            <person name="Hoang L."/>
            <person name="Keagle P."/>
            <person name="Lumm W."/>
            <person name="Pothier B."/>
            <person name="Qiu D."/>
            <person name="Spadafora R."/>
            <person name="Vicare R."/>
            <person name="Wang Y."/>
            <person name="Wierzbowski J."/>
            <person name="Gibson R."/>
            <person name="Jiwani N."/>
            <person name="Caruso A."/>
            <person name="Bush D."/>
            <person name="Safer H."/>
            <person name="Patwell D."/>
            <person name="Prabhakar S."/>
            <person name="McDougall S."/>
            <person name="Shimer G."/>
            <person name="Goyal A."/>
            <person name="Pietrovski S."/>
            <person name="Church G.M."/>
            <person name="Daniels C.J."/>
            <person name="Mao J.-I."/>
            <person name="Rice P."/>
            <person name="Noelling J."/>
            <person name="Reeve J.N."/>
        </authorList>
    </citation>
    <scope>NUCLEOTIDE SEQUENCE [LARGE SCALE GENOMIC DNA]</scope>
    <source>
        <strain>ATCC 29096 / DSM 1053 / JCM 10044 / NBRC 100330 / Delta H</strain>
    </source>
</reference>